<dbReference type="EMBL" id="M84603">
    <property type="protein sequence ID" value="AAA30745.1"/>
    <property type="molecule type" value="mRNA"/>
</dbReference>
<dbReference type="EMBL" id="BC110191">
    <property type="protein sequence ID" value="AAI10192.1"/>
    <property type="molecule type" value="mRNA"/>
</dbReference>
<dbReference type="PIR" id="JQ1403">
    <property type="entry name" value="JQ1403"/>
</dbReference>
<dbReference type="RefSeq" id="NP_777041.1">
    <property type="nucleotide sequence ID" value="NM_174616.3"/>
</dbReference>
<dbReference type="PDB" id="1SFP">
    <property type="method" value="X-ray"/>
    <property type="resolution" value="1.90 A"/>
    <property type="chains" value="A=21-134"/>
</dbReference>
<dbReference type="PDBsum" id="1SFP"/>
<dbReference type="SMR" id="P29392"/>
<dbReference type="FunCoup" id="P29392">
    <property type="interactions" value="3"/>
</dbReference>
<dbReference type="STRING" id="9913.ENSBTAP00000014297"/>
<dbReference type="PaxDb" id="9913-ENSBTAP00000014297"/>
<dbReference type="GeneID" id="282373"/>
<dbReference type="KEGG" id="bta:282373"/>
<dbReference type="CTD" id="282373"/>
<dbReference type="VEuPathDB" id="HostDB:ENSBTAG00000010796"/>
<dbReference type="eggNOG" id="ENOG502TD48">
    <property type="taxonomic scope" value="Eukaryota"/>
</dbReference>
<dbReference type="InParanoid" id="P29392"/>
<dbReference type="OMA" id="CGGHYTD"/>
<dbReference type="OrthoDB" id="9517200at2759"/>
<dbReference type="EvolutionaryTrace" id="P29392"/>
<dbReference type="Proteomes" id="UP000009136">
    <property type="component" value="Chromosome 26"/>
</dbReference>
<dbReference type="Bgee" id="ENSBTAG00000010796">
    <property type="expression patterns" value="Expressed in mammary gland fat and 32 other cell types or tissues"/>
</dbReference>
<dbReference type="GO" id="GO:0005576">
    <property type="term" value="C:extracellular region"/>
    <property type="evidence" value="ECO:0007669"/>
    <property type="project" value="UniProtKB-SubCell"/>
</dbReference>
<dbReference type="GO" id="GO:0008083">
    <property type="term" value="F:growth factor activity"/>
    <property type="evidence" value="ECO:0007669"/>
    <property type="project" value="UniProtKB-KW"/>
</dbReference>
<dbReference type="GO" id="GO:0007338">
    <property type="term" value="P:single fertilization"/>
    <property type="evidence" value="ECO:0007669"/>
    <property type="project" value="InterPro"/>
</dbReference>
<dbReference type="CDD" id="cd00041">
    <property type="entry name" value="CUB"/>
    <property type="match status" value="1"/>
</dbReference>
<dbReference type="Gene3D" id="2.60.120.290">
    <property type="entry name" value="Spermadhesin, CUB domain"/>
    <property type="match status" value="1"/>
</dbReference>
<dbReference type="InterPro" id="IPR000859">
    <property type="entry name" value="CUB_dom"/>
</dbReference>
<dbReference type="InterPro" id="IPR035914">
    <property type="entry name" value="Sperma_CUB_dom_sf"/>
</dbReference>
<dbReference type="InterPro" id="IPR000124">
    <property type="entry name" value="Spermadhesin"/>
</dbReference>
<dbReference type="InterPro" id="IPR052129">
    <property type="entry name" value="Spermadhesin-Link_domain"/>
</dbReference>
<dbReference type="PANTHER" id="PTHR46908:SF8">
    <property type="entry name" value="C-TYPE LECTIN DOMAIN-CONTAINING PROTEIN"/>
    <property type="match status" value="1"/>
</dbReference>
<dbReference type="PANTHER" id="PTHR46908">
    <property type="entry name" value="CUBILIN-LIKE PROTEIN"/>
    <property type="match status" value="1"/>
</dbReference>
<dbReference type="Pfam" id="PF00431">
    <property type="entry name" value="CUB"/>
    <property type="match status" value="1"/>
</dbReference>
<dbReference type="SMART" id="SM00042">
    <property type="entry name" value="CUB"/>
    <property type="match status" value="1"/>
</dbReference>
<dbReference type="SUPFAM" id="SSF49854">
    <property type="entry name" value="Spermadhesin, CUB domain"/>
    <property type="match status" value="1"/>
</dbReference>
<dbReference type="PROSITE" id="PS01180">
    <property type="entry name" value="CUB"/>
    <property type="match status" value="1"/>
</dbReference>
<dbReference type="PROSITE" id="PS00985">
    <property type="entry name" value="SPERMADHESIN_1"/>
    <property type="match status" value="1"/>
</dbReference>
<dbReference type="PROSITE" id="PS00986">
    <property type="entry name" value="SPERMADHESIN_2"/>
    <property type="match status" value="1"/>
</dbReference>
<gene>
    <name type="primary">SPADH1</name>
</gene>
<sequence length="134" mass="15036">MKLSSVIPWALLLSTATVDSMDWLPRNTNCGGILKEESGVIATYYGPKTNCVWTIQMPPEYHVRVSIQYLQLNCNKESLEIIDGLPGSPVLGKICEGSLMDYRSSGSIMTVKYIREPEHPASFYEVLYFQDPQA</sequence>
<accession>P29392</accession>
<accession>Q2YDJ6</accession>
<keyword id="KW-0002">3D-structure</keyword>
<keyword id="KW-0903">Direct protein sequencing</keyword>
<keyword id="KW-1015">Disulfide bond</keyword>
<keyword id="KW-0339">Growth factor</keyword>
<keyword id="KW-1185">Reference proteome</keyword>
<keyword id="KW-0964">Secreted</keyword>
<keyword id="KW-0732">Signal</keyword>
<proteinExistence type="evidence at protein level"/>
<organism>
    <name type="scientific">Bos taurus</name>
    <name type="common">Bovine</name>
    <dbReference type="NCBI Taxonomy" id="9913"/>
    <lineage>
        <taxon>Eukaryota</taxon>
        <taxon>Metazoa</taxon>
        <taxon>Chordata</taxon>
        <taxon>Craniata</taxon>
        <taxon>Vertebrata</taxon>
        <taxon>Euteleostomi</taxon>
        <taxon>Mammalia</taxon>
        <taxon>Eutheria</taxon>
        <taxon>Laurasiatheria</taxon>
        <taxon>Artiodactyla</taxon>
        <taxon>Ruminantia</taxon>
        <taxon>Pecora</taxon>
        <taxon>Bovidae</taxon>
        <taxon>Bovinae</taxon>
        <taxon>Bos</taxon>
    </lineage>
</organism>
<feature type="signal peptide" evidence="2">
    <location>
        <begin position="1"/>
        <end position="20"/>
    </location>
</feature>
<feature type="chain" id="PRO_0000033187" description="Spermadhesin-1">
    <location>
        <begin position="21"/>
        <end position="134"/>
    </location>
</feature>
<feature type="domain" description="CUB" evidence="1">
    <location>
        <begin position="30"/>
        <end position="131"/>
    </location>
</feature>
<feature type="disulfide bond" evidence="1 3">
    <location>
        <begin position="30"/>
        <end position="51"/>
    </location>
</feature>
<feature type="disulfide bond" evidence="1 3">
    <location>
        <begin position="74"/>
        <end position="95"/>
    </location>
</feature>
<feature type="sequence conflict" description="In Ref. 3; AA sequence." evidence="4" ref="3">
    <original>T</original>
    <variation>H</variation>
    <location>
        <position position="43"/>
    </location>
</feature>
<feature type="strand" evidence="5">
    <location>
        <begin position="32"/>
        <end position="34"/>
    </location>
</feature>
<feature type="strand" evidence="5">
    <location>
        <begin position="37"/>
        <end position="42"/>
    </location>
</feature>
<feature type="strand" evidence="5">
    <location>
        <begin position="49"/>
        <end position="56"/>
    </location>
</feature>
<feature type="strand" evidence="5">
    <location>
        <begin position="62"/>
        <end position="71"/>
    </location>
</feature>
<feature type="turn" evidence="5">
    <location>
        <begin position="74"/>
        <end position="76"/>
    </location>
</feature>
<feature type="strand" evidence="5">
    <location>
        <begin position="77"/>
        <end position="85"/>
    </location>
</feature>
<feature type="strand" evidence="5">
    <location>
        <begin position="90"/>
        <end position="103"/>
    </location>
</feature>
<feature type="strand" evidence="5">
    <location>
        <begin position="105"/>
        <end position="115"/>
    </location>
</feature>
<feature type="strand" evidence="5">
    <location>
        <begin position="125"/>
        <end position="132"/>
    </location>
</feature>
<comment type="function">
    <text>Stimulates cell division and progesterone secretion of bovine granulosa cells in vitro in a potent and dose dependent manner. This protein appears to be a potent growth factor with effects on ovarian granulosa cells.</text>
</comment>
<comment type="subcellular location">
    <subcellularLocation>
        <location>Secreted</location>
    </subcellularLocation>
</comment>
<comment type="tissue specificity">
    <text>Seminal vesicle tissue, ampulla and weakly in tissue of epididymis.</text>
</comment>
<comment type="similarity">
    <text evidence="4">Belongs to the spermadhesin family.</text>
</comment>
<protein>
    <recommendedName>
        <fullName>Spermadhesin-1</fullName>
    </recommendedName>
    <alternativeName>
        <fullName>Acidic seminal fluid protein</fullName>
        <shortName>ASFP</shortName>
    </alternativeName>
</protein>
<evidence type="ECO:0000255" key="1">
    <source>
        <dbReference type="PROSITE-ProRule" id="PRU00059"/>
    </source>
</evidence>
<evidence type="ECO:0000269" key="2">
    <source>
    </source>
</evidence>
<evidence type="ECO:0000269" key="3">
    <source>
    </source>
</evidence>
<evidence type="ECO:0000305" key="4"/>
<evidence type="ECO:0007829" key="5">
    <source>
        <dbReference type="PDB" id="1SFP"/>
    </source>
</evidence>
<reference key="1">
    <citation type="journal article" date="1992" name="Biochem. Biophys. Res. Commun.">
        <title>Characterization by cDNA cloning of the mRNA of a new growth factor from bovine seminal plasma: acidic seminal fluid protein.</title>
        <authorList>
            <person name="Wempe F."/>
            <person name="Einspanier R."/>
            <person name="Scheit K.H."/>
        </authorList>
    </citation>
    <scope>NUCLEOTIDE SEQUENCE [MRNA]</scope>
    <source>
        <tissue>Seminal vesicle</tissue>
    </source>
</reference>
<reference key="2">
    <citation type="submission" date="2005-11" db="EMBL/GenBank/DDBJ databases">
        <authorList>
            <consortium name="NIH - Mammalian Gene Collection (MGC) project"/>
        </authorList>
    </citation>
    <scope>NUCLEOTIDE SEQUENCE [LARGE SCALE MRNA]</scope>
    <source>
        <strain>Crossbred X Angus</strain>
        <tissue>Liver</tissue>
    </source>
</reference>
<reference key="3">
    <citation type="journal article" date="1991" name="Biochem. Biophys. Res. Commun.">
        <title>Characterization of a new bioactive protein from bovine seminal fluid.</title>
        <authorList>
            <person name="Einspanier R."/>
            <person name="Einspanier A."/>
            <person name="Wempe F."/>
            <person name="Scheit K.H."/>
        </authorList>
    </citation>
    <scope>PROTEIN SEQUENCE OF 21-43</scope>
    <source>
        <tissue>Seminal vesicle</tissue>
    </source>
</reference>
<reference key="4">
    <citation type="journal article" date="1994" name="FEBS Lett.">
        <title>Bovine seminal plasma aSFP: localization of disulfide bridges and detection of three different isoelectric forms.</title>
        <authorList>
            <person name="Einspanier R."/>
            <person name="Krause I."/>
            <person name="Calvete J.J."/>
            <person name="Toepfer-Petersen E."/>
            <person name="Klostermeyer H."/>
            <person name="Karg H."/>
        </authorList>
    </citation>
    <scope>DISULFIDE BONDS</scope>
</reference>
<reference key="5">
    <citation type="journal article" date="1997" name="Nat. Struct. Biol.">
        <title>The crystal structures of two spermadhesins reveal the CUB domain fold.</title>
        <authorList>
            <person name="Romero A."/>
            <person name="Romao M.J."/>
            <person name="Varela P.F."/>
            <person name="Koelln I."/>
            <person name="Dias J.M."/>
            <person name="Carvalho A.L."/>
            <person name="Sanz L."/>
            <person name="Toepfer-Petersen E."/>
            <person name="Calvete J.J."/>
        </authorList>
    </citation>
    <scope>X-RAY CRYSTALLOGRAPHY (1.9 ANGSTROMS)</scope>
</reference>
<name>SPAD1_BOVIN</name>